<name>PROA_BURCM</name>
<reference key="1">
    <citation type="submission" date="2006-08" db="EMBL/GenBank/DDBJ databases">
        <title>Complete sequence of chromosome 1 of Burkholderia cepacia AMMD.</title>
        <authorList>
            <person name="Copeland A."/>
            <person name="Lucas S."/>
            <person name="Lapidus A."/>
            <person name="Barry K."/>
            <person name="Detter J.C."/>
            <person name="Glavina del Rio T."/>
            <person name="Hammon N."/>
            <person name="Israni S."/>
            <person name="Pitluck S."/>
            <person name="Bruce D."/>
            <person name="Chain P."/>
            <person name="Malfatti S."/>
            <person name="Shin M."/>
            <person name="Vergez L."/>
            <person name="Schmutz J."/>
            <person name="Larimer F."/>
            <person name="Land M."/>
            <person name="Hauser L."/>
            <person name="Kyrpides N."/>
            <person name="Kim E."/>
            <person name="Parke J."/>
            <person name="Coenye T."/>
            <person name="Konstantinidis K."/>
            <person name="Ramette A."/>
            <person name="Tiedje J."/>
            <person name="Richardson P."/>
        </authorList>
    </citation>
    <scope>NUCLEOTIDE SEQUENCE [LARGE SCALE GENOMIC DNA]</scope>
    <source>
        <strain>ATCC BAA-244 / DSM 16087 / CCUG 44356 / LMG 19182 / AMMD</strain>
    </source>
</reference>
<gene>
    <name evidence="1" type="primary">proA</name>
    <name type="ordered locus">Bamb_0552</name>
</gene>
<accession>Q0BIB2</accession>
<organism>
    <name type="scientific">Burkholderia ambifaria (strain ATCC BAA-244 / DSM 16087 / CCUG 44356 / LMG 19182 / AMMD)</name>
    <name type="common">Burkholderia cepacia (strain AMMD)</name>
    <dbReference type="NCBI Taxonomy" id="339670"/>
    <lineage>
        <taxon>Bacteria</taxon>
        <taxon>Pseudomonadati</taxon>
        <taxon>Pseudomonadota</taxon>
        <taxon>Betaproteobacteria</taxon>
        <taxon>Burkholderiales</taxon>
        <taxon>Burkholderiaceae</taxon>
        <taxon>Burkholderia</taxon>
        <taxon>Burkholderia cepacia complex</taxon>
    </lineage>
</organism>
<evidence type="ECO:0000255" key="1">
    <source>
        <dbReference type="HAMAP-Rule" id="MF_00412"/>
    </source>
</evidence>
<dbReference type="EC" id="1.2.1.41" evidence="1"/>
<dbReference type="EMBL" id="CP000440">
    <property type="protein sequence ID" value="ABI86111.1"/>
    <property type="molecule type" value="Genomic_DNA"/>
</dbReference>
<dbReference type="RefSeq" id="WP_011655961.1">
    <property type="nucleotide sequence ID" value="NC_008390.1"/>
</dbReference>
<dbReference type="SMR" id="Q0BIB2"/>
<dbReference type="GeneID" id="93084032"/>
<dbReference type="KEGG" id="bam:Bamb_0552"/>
<dbReference type="PATRIC" id="fig|339670.21.peg.1050"/>
<dbReference type="eggNOG" id="COG0014">
    <property type="taxonomic scope" value="Bacteria"/>
</dbReference>
<dbReference type="UniPathway" id="UPA00098">
    <property type="reaction ID" value="UER00360"/>
</dbReference>
<dbReference type="Proteomes" id="UP000000662">
    <property type="component" value="Chromosome 1"/>
</dbReference>
<dbReference type="GO" id="GO:0005737">
    <property type="term" value="C:cytoplasm"/>
    <property type="evidence" value="ECO:0007669"/>
    <property type="project" value="UniProtKB-SubCell"/>
</dbReference>
<dbReference type="GO" id="GO:0004350">
    <property type="term" value="F:glutamate-5-semialdehyde dehydrogenase activity"/>
    <property type="evidence" value="ECO:0007669"/>
    <property type="project" value="UniProtKB-UniRule"/>
</dbReference>
<dbReference type="GO" id="GO:0050661">
    <property type="term" value="F:NADP binding"/>
    <property type="evidence" value="ECO:0007669"/>
    <property type="project" value="InterPro"/>
</dbReference>
<dbReference type="GO" id="GO:0055129">
    <property type="term" value="P:L-proline biosynthetic process"/>
    <property type="evidence" value="ECO:0007669"/>
    <property type="project" value="UniProtKB-UniRule"/>
</dbReference>
<dbReference type="CDD" id="cd07079">
    <property type="entry name" value="ALDH_F18-19_ProA-GPR"/>
    <property type="match status" value="1"/>
</dbReference>
<dbReference type="FunFam" id="3.40.309.10:FF:000006">
    <property type="entry name" value="Gamma-glutamyl phosphate reductase"/>
    <property type="match status" value="1"/>
</dbReference>
<dbReference type="Gene3D" id="3.40.605.10">
    <property type="entry name" value="Aldehyde Dehydrogenase, Chain A, domain 1"/>
    <property type="match status" value="1"/>
</dbReference>
<dbReference type="Gene3D" id="3.40.309.10">
    <property type="entry name" value="Aldehyde Dehydrogenase, Chain A, domain 2"/>
    <property type="match status" value="1"/>
</dbReference>
<dbReference type="HAMAP" id="MF_00412">
    <property type="entry name" value="ProA"/>
    <property type="match status" value="1"/>
</dbReference>
<dbReference type="InterPro" id="IPR016161">
    <property type="entry name" value="Ald_DH/histidinol_DH"/>
</dbReference>
<dbReference type="InterPro" id="IPR016163">
    <property type="entry name" value="Ald_DH_C"/>
</dbReference>
<dbReference type="InterPro" id="IPR016162">
    <property type="entry name" value="Ald_DH_N"/>
</dbReference>
<dbReference type="InterPro" id="IPR015590">
    <property type="entry name" value="Aldehyde_DH_dom"/>
</dbReference>
<dbReference type="InterPro" id="IPR020593">
    <property type="entry name" value="G-glutamylP_reductase_CS"/>
</dbReference>
<dbReference type="InterPro" id="IPR012134">
    <property type="entry name" value="Glu-5-SA_DH"/>
</dbReference>
<dbReference type="InterPro" id="IPR000965">
    <property type="entry name" value="GPR_dom"/>
</dbReference>
<dbReference type="NCBIfam" id="NF001221">
    <property type="entry name" value="PRK00197.1"/>
    <property type="match status" value="1"/>
</dbReference>
<dbReference type="NCBIfam" id="TIGR00407">
    <property type="entry name" value="proA"/>
    <property type="match status" value="1"/>
</dbReference>
<dbReference type="PANTHER" id="PTHR11063:SF8">
    <property type="entry name" value="DELTA-1-PYRROLINE-5-CARBOXYLATE SYNTHASE"/>
    <property type="match status" value="1"/>
</dbReference>
<dbReference type="PANTHER" id="PTHR11063">
    <property type="entry name" value="GLUTAMATE SEMIALDEHYDE DEHYDROGENASE"/>
    <property type="match status" value="1"/>
</dbReference>
<dbReference type="Pfam" id="PF00171">
    <property type="entry name" value="Aldedh"/>
    <property type="match status" value="1"/>
</dbReference>
<dbReference type="PIRSF" id="PIRSF000151">
    <property type="entry name" value="GPR"/>
    <property type="match status" value="1"/>
</dbReference>
<dbReference type="SUPFAM" id="SSF53720">
    <property type="entry name" value="ALDH-like"/>
    <property type="match status" value="1"/>
</dbReference>
<dbReference type="PROSITE" id="PS01223">
    <property type="entry name" value="PROA"/>
    <property type="match status" value="1"/>
</dbReference>
<keyword id="KW-0028">Amino-acid biosynthesis</keyword>
<keyword id="KW-0963">Cytoplasm</keyword>
<keyword id="KW-0521">NADP</keyword>
<keyword id="KW-0560">Oxidoreductase</keyword>
<keyword id="KW-0641">Proline biosynthesis</keyword>
<sequence length="423" mass="45132">MDIDQYMTDLGRRARHASRAMARASTAAKNAALDAVARAIERDAQALKDANARDVARAREKGLDAAFIDRLTLSDNALKTMVEGLRQVASLADPIGEIGNLKYRPSGIQVGQMRVPLGVIGIIYESRPNVTIDAAALCLKSGNATILRGGSEALESNAALAKLIGEGLEAAGLPQDAVQVVATADRAAVGKLITMTDYVDVIVPRGGKSLIERLINEARVPMIKHLDGICHVYVDDRADLAKALTVCDNAKTHRYGTCNTMETLLVASGIAATLLPPLGKLYRDKQVELRVDAAARAVLAEAGVGPLVDATDEDWHTEYLAPVLAIKVVDGLDAAIEHINHYGSHHTDAIVTEDHDRAMRFLREVDSASVMVNASTRFADGFEFGLGAEIGISNDKLHARGPVGLEGLTSLKYVVLGHGEGRQ</sequence>
<proteinExistence type="inferred from homology"/>
<feature type="chain" id="PRO_1000049939" description="Gamma-glutamyl phosphate reductase">
    <location>
        <begin position="1"/>
        <end position="423"/>
    </location>
</feature>
<comment type="function">
    <text evidence="1">Catalyzes the NADPH-dependent reduction of L-glutamate 5-phosphate into L-glutamate 5-semialdehyde and phosphate. The product spontaneously undergoes cyclization to form 1-pyrroline-5-carboxylate.</text>
</comment>
<comment type="catalytic activity">
    <reaction evidence="1">
        <text>L-glutamate 5-semialdehyde + phosphate + NADP(+) = L-glutamyl 5-phosphate + NADPH + H(+)</text>
        <dbReference type="Rhea" id="RHEA:19541"/>
        <dbReference type="ChEBI" id="CHEBI:15378"/>
        <dbReference type="ChEBI" id="CHEBI:43474"/>
        <dbReference type="ChEBI" id="CHEBI:57783"/>
        <dbReference type="ChEBI" id="CHEBI:58066"/>
        <dbReference type="ChEBI" id="CHEBI:58274"/>
        <dbReference type="ChEBI" id="CHEBI:58349"/>
        <dbReference type="EC" id="1.2.1.41"/>
    </reaction>
</comment>
<comment type="pathway">
    <text evidence="1">Amino-acid biosynthesis; L-proline biosynthesis; L-glutamate 5-semialdehyde from L-glutamate: step 2/2.</text>
</comment>
<comment type="subcellular location">
    <subcellularLocation>
        <location evidence="1">Cytoplasm</location>
    </subcellularLocation>
</comment>
<comment type="similarity">
    <text evidence="1">Belongs to the gamma-glutamyl phosphate reductase family.</text>
</comment>
<protein>
    <recommendedName>
        <fullName evidence="1">Gamma-glutamyl phosphate reductase</fullName>
        <shortName evidence="1">GPR</shortName>
        <ecNumber evidence="1">1.2.1.41</ecNumber>
    </recommendedName>
    <alternativeName>
        <fullName evidence="1">Glutamate-5-semialdehyde dehydrogenase</fullName>
    </alternativeName>
    <alternativeName>
        <fullName evidence="1">Glutamyl-gamma-semialdehyde dehydrogenase</fullName>
        <shortName evidence="1">GSA dehydrogenase</shortName>
    </alternativeName>
</protein>